<accession>Q7MWM5</accession>
<reference key="1">
    <citation type="journal article" date="2003" name="J. Bacteriol.">
        <title>Complete genome sequence of the oral pathogenic bacterium Porphyromonas gingivalis strain W83.</title>
        <authorList>
            <person name="Nelson K.E."/>
            <person name="Fleischmann R.D."/>
            <person name="DeBoy R.T."/>
            <person name="Paulsen I.T."/>
            <person name="Fouts D.E."/>
            <person name="Eisen J.A."/>
            <person name="Daugherty S.C."/>
            <person name="Dodson R.J."/>
            <person name="Durkin A.S."/>
            <person name="Gwinn M.L."/>
            <person name="Haft D.H."/>
            <person name="Kolonay J.F."/>
            <person name="Nelson W.C."/>
            <person name="Mason T.M."/>
            <person name="Tallon L."/>
            <person name="Gray J."/>
            <person name="Granger D."/>
            <person name="Tettelin H."/>
            <person name="Dong H."/>
            <person name="Galvin J.L."/>
            <person name="Duncan M.J."/>
            <person name="Dewhirst F.E."/>
            <person name="Fraser C.M."/>
        </authorList>
    </citation>
    <scope>NUCLEOTIDE SEQUENCE [LARGE SCALE GENOMIC DNA]</scope>
    <source>
        <strain>ATCC BAA-308 / W83</strain>
    </source>
</reference>
<keyword id="KW-0067">ATP-binding</keyword>
<keyword id="KW-0131">Cell cycle</keyword>
<keyword id="KW-0132">Cell division</keyword>
<keyword id="KW-0133">Cell shape</keyword>
<keyword id="KW-0961">Cell wall biogenesis/degradation</keyword>
<keyword id="KW-0963">Cytoplasm</keyword>
<keyword id="KW-0436">Ligase</keyword>
<keyword id="KW-0547">Nucleotide-binding</keyword>
<keyword id="KW-0573">Peptidoglycan synthesis</keyword>
<keyword id="KW-1185">Reference proteome</keyword>
<gene>
    <name evidence="1" type="primary">murD</name>
    <name type="ordered locus">PG_0578</name>
</gene>
<feature type="chain" id="PRO_0000109057" description="UDP-N-acetylmuramoylalanine--D-glutamate ligase">
    <location>
        <begin position="1"/>
        <end position="450"/>
    </location>
</feature>
<feature type="binding site" evidence="1">
    <location>
        <begin position="113"/>
        <end position="119"/>
    </location>
    <ligand>
        <name>ATP</name>
        <dbReference type="ChEBI" id="CHEBI:30616"/>
    </ligand>
</feature>
<protein>
    <recommendedName>
        <fullName evidence="1">UDP-N-acetylmuramoylalanine--D-glutamate ligase</fullName>
        <ecNumber evidence="1">6.3.2.9</ecNumber>
    </recommendedName>
    <alternativeName>
        <fullName evidence="1">D-glutamic acid-adding enzyme</fullName>
    </alternativeName>
    <alternativeName>
        <fullName evidence="1">UDP-N-acetylmuramoyl-L-alanyl-D-glutamate synthetase</fullName>
    </alternativeName>
</protein>
<organism>
    <name type="scientific">Porphyromonas gingivalis (strain ATCC BAA-308 / W83)</name>
    <dbReference type="NCBI Taxonomy" id="242619"/>
    <lineage>
        <taxon>Bacteria</taxon>
        <taxon>Pseudomonadati</taxon>
        <taxon>Bacteroidota</taxon>
        <taxon>Bacteroidia</taxon>
        <taxon>Bacteroidales</taxon>
        <taxon>Porphyromonadaceae</taxon>
        <taxon>Porphyromonas</taxon>
    </lineage>
</organism>
<sequence>MDRLKYDIVVLGAGESGVGAALLAQAKGLHVFVSDYGKIAPKYKEELNRYAIPYEEGRHTEAIILEAKEIIKSPGIPDTAPIIRQAVAKEIGIVSEIEFAGRYTDAFMVCITGSNGKTTTTMWLYHTLCKAGLDVGLAGNVGFSLARQVAYDPHPYYVIELSSFQLDNMYDFRANVAILLNITPDHLDRYDHRFELYAEAKMRITRNQQPEDCFIYWEDDPFISRWVAEHPPVARLLPFAMEARTDNTTAWINEKNELVVMNLNSPFVMDEELLALSGMHNRHNAMATAIAAKAMDIKNEAIREALQDFKNVPHRLEKIARVKGVDYINDSKATNVNSTWYALESMKTRVILILGGTDKGNDYTDIENLVLSKVDGLIFLGIDNEKLHKFFDGKISRIADACSMHEAVSLAYKMASKGDTVLLSPACASFDLFQNYEDRGDQFRKEVLNL</sequence>
<evidence type="ECO:0000255" key="1">
    <source>
        <dbReference type="HAMAP-Rule" id="MF_00639"/>
    </source>
</evidence>
<comment type="function">
    <text evidence="1">Cell wall formation. Catalyzes the addition of glutamate to the nucleotide precursor UDP-N-acetylmuramoyl-L-alanine (UMA).</text>
</comment>
<comment type="catalytic activity">
    <reaction evidence="1">
        <text>UDP-N-acetyl-alpha-D-muramoyl-L-alanine + D-glutamate + ATP = UDP-N-acetyl-alpha-D-muramoyl-L-alanyl-D-glutamate + ADP + phosphate + H(+)</text>
        <dbReference type="Rhea" id="RHEA:16429"/>
        <dbReference type="ChEBI" id="CHEBI:15378"/>
        <dbReference type="ChEBI" id="CHEBI:29986"/>
        <dbReference type="ChEBI" id="CHEBI:30616"/>
        <dbReference type="ChEBI" id="CHEBI:43474"/>
        <dbReference type="ChEBI" id="CHEBI:83898"/>
        <dbReference type="ChEBI" id="CHEBI:83900"/>
        <dbReference type="ChEBI" id="CHEBI:456216"/>
        <dbReference type="EC" id="6.3.2.9"/>
    </reaction>
</comment>
<comment type="pathway">
    <text evidence="1">Cell wall biogenesis; peptidoglycan biosynthesis.</text>
</comment>
<comment type="subcellular location">
    <subcellularLocation>
        <location evidence="1">Cytoplasm</location>
    </subcellularLocation>
</comment>
<comment type="similarity">
    <text evidence="1">Belongs to the MurCDEF family.</text>
</comment>
<proteinExistence type="inferred from homology"/>
<name>MURD_PORGI</name>
<dbReference type="EC" id="6.3.2.9" evidence="1"/>
<dbReference type="EMBL" id="AE015924">
    <property type="protein sequence ID" value="AAQ65765.1"/>
    <property type="molecule type" value="Genomic_DNA"/>
</dbReference>
<dbReference type="RefSeq" id="WP_005873937.1">
    <property type="nucleotide sequence ID" value="NC_002950.2"/>
</dbReference>
<dbReference type="SMR" id="Q7MWM5"/>
<dbReference type="STRING" id="242619.PG_0578"/>
<dbReference type="EnsemblBacteria" id="AAQ65765">
    <property type="protein sequence ID" value="AAQ65765"/>
    <property type="gene ID" value="PG_0578"/>
</dbReference>
<dbReference type="KEGG" id="pgi:PG_0578"/>
<dbReference type="PATRIC" id="fig|242619.8.peg.527"/>
<dbReference type="eggNOG" id="COG0771">
    <property type="taxonomic scope" value="Bacteria"/>
</dbReference>
<dbReference type="HOGENOM" id="CLU_032540_0_0_10"/>
<dbReference type="BioCyc" id="PGIN242619:G1G02-536-MONOMER"/>
<dbReference type="UniPathway" id="UPA00219"/>
<dbReference type="Proteomes" id="UP000000588">
    <property type="component" value="Chromosome"/>
</dbReference>
<dbReference type="GO" id="GO:0005737">
    <property type="term" value="C:cytoplasm"/>
    <property type="evidence" value="ECO:0007669"/>
    <property type="project" value="UniProtKB-SubCell"/>
</dbReference>
<dbReference type="GO" id="GO:0005524">
    <property type="term" value="F:ATP binding"/>
    <property type="evidence" value="ECO:0007669"/>
    <property type="project" value="UniProtKB-UniRule"/>
</dbReference>
<dbReference type="GO" id="GO:0008764">
    <property type="term" value="F:UDP-N-acetylmuramoylalanine-D-glutamate ligase activity"/>
    <property type="evidence" value="ECO:0007669"/>
    <property type="project" value="UniProtKB-UniRule"/>
</dbReference>
<dbReference type="GO" id="GO:0051301">
    <property type="term" value="P:cell division"/>
    <property type="evidence" value="ECO:0007669"/>
    <property type="project" value="UniProtKB-KW"/>
</dbReference>
<dbReference type="GO" id="GO:0071555">
    <property type="term" value="P:cell wall organization"/>
    <property type="evidence" value="ECO:0007669"/>
    <property type="project" value="UniProtKB-KW"/>
</dbReference>
<dbReference type="GO" id="GO:0009252">
    <property type="term" value="P:peptidoglycan biosynthetic process"/>
    <property type="evidence" value="ECO:0007669"/>
    <property type="project" value="UniProtKB-UniRule"/>
</dbReference>
<dbReference type="GO" id="GO:0008360">
    <property type="term" value="P:regulation of cell shape"/>
    <property type="evidence" value="ECO:0007669"/>
    <property type="project" value="UniProtKB-KW"/>
</dbReference>
<dbReference type="Gene3D" id="3.90.190.20">
    <property type="entry name" value="Mur ligase, C-terminal domain"/>
    <property type="match status" value="1"/>
</dbReference>
<dbReference type="Gene3D" id="3.40.1190.10">
    <property type="entry name" value="Mur-like, catalytic domain"/>
    <property type="match status" value="1"/>
</dbReference>
<dbReference type="Gene3D" id="3.40.50.720">
    <property type="entry name" value="NAD(P)-binding Rossmann-like Domain"/>
    <property type="match status" value="1"/>
</dbReference>
<dbReference type="HAMAP" id="MF_00639">
    <property type="entry name" value="MurD"/>
    <property type="match status" value="1"/>
</dbReference>
<dbReference type="InterPro" id="IPR036565">
    <property type="entry name" value="Mur-like_cat_sf"/>
</dbReference>
<dbReference type="InterPro" id="IPR004101">
    <property type="entry name" value="Mur_ligase_C"/>
</dbReference>
<dbReference type="InterPro" id="IPR036615">
    <property type="entry name" value="Mur_ligase_C_dom_sf"/>
</dbReference>
<dbReference type="InterPro" id="IPR013221">
    <property type="entry name" value="Mur_ligase_cen"/>
</dbReference>
<dbReference type="InterPro" id="IPR005762">
    <property type="entry name" value="MurD"/>
</dbReference>
<dbReference type="NCBIfam" id="TIGR01087">
    <property type="entry name" value="murD"/>
    <property type="match status" value="1"/>
</dbReference>
<dbReference type="PANTHER" id="PTHR43692">
    <property type="entry name" value="UDP-N-ACETYLMURAMOYLALANINE--D-GLUTAMATE LIGASE"/>
    <property type="match status" value="1"/>
</dbReference>
<dbReference type="PANTHER" id="PTHR43692:SF1">
    <property type="entry name" value="UDP-N-ACETYLMURAMOYLALANINE--D-GLUTAMATE LIGASE"/>
    <property type="match status" value="1"/>
</dbReference>
<dbReference type="Pfam" id="PF02875">
    <property type="entry name" value="Mur_ligase_C"/>
    <property type="match status" value="1"/>
</dbReference>
<dbReference type="Pfam" id="PF08245">
    <property type="entry name" value="Mur_ligase_M"/>
    <property type="match status" value="1"/>
</dbReference>
<dbReference type="Pfam" id="PF21799">
    <property type="entry name" value="MurD-like_N"/>
    <property type="match status" value="1"/>
</dbReference>
<dbReference type="Pfam" id="PF21377">
    <property type="entry name" value="MurD_N"/>
    <property type="match status" value="1"/>
</dbReference>
<dbReference type="SUPFAM" id="SSF51984">
    <property type="entry name" value="MurCD N-terminal domain"/>
    <property type="match status" value="1"/>
</dbReference>
<dbReference type="SUPFAM" id="SSF53623">
    <property type="entry name" value="MurD-like peptide ligases, catalytic domain"/>
    <property type="match status" value="1"/>
</dbReference>
<dbReference type="SUPFAM" id="SSF53244">
    <property type="entry name" value="MurD-like peptide ligases, peptide-binding domain"/>
    <property type="match status" value="1"/>
</dbReference>